<organism>
    <name type="scientific">Oryctolagus cuniculus</name>
    <name type="common">Rabbit</name>
    <dbReference type="NCBI Taxonomy" id="9986"/>
    <lineage>
        <taxon>Eukaryota</taxon>
        <taxon>Metazoa</taxon>
        <taxon>Chordata</taxon>
        <taxon>Craniata</taxon>
        <taxon>Vertebrata</taxon>
        <taxon>Euteleostomi</taxon>
        <taxon>Mammalia</taxon>
        <taxon>Eutheria</taxon>
        <taxon>Euarchontoglires</taxon>
        <taxon>Glires</taxon>
        <taxon>Lagomorpha</taxon>
        <taxon>Leporidae</taxon>
        <taxon>Oryctolagus</taxon>
    </lineage>
</organism>
<reference key="1">
    <citation type="journal article" date="1988" name="J. Immunol.">
        <title>Rabbit MHC. II. Sequence analysis of the R-DP alpha- and beta-genes.</title>
        <authorList>
            <person name="Sittisombut N."/>
            <person name="Mordacq J."/>
            <person name="Knight K.L."/>
        </authorList>
    </citation>
    <scope>NUCLEOTIDE SEQUENCE [GENOMIC DNA]</scope>
</reference>
<dbReference type="EMBL" id="M21468">
    <property type="protein sequence ID" value="AAA31393.1"/>
    <property type="molecule type" value="Genomic_DNA"/>
</dbReference>
<dbReference type="EMBL" id="M21465">
    <property type="protein sequence ID" value="AAA31393.1"/>
    <property type="status" value="JOINED"/>
    <property type="molecule type" value="Genomic_DNA"/>
</dbReference>
<dbReference type="EMBL" id="M21466">
    <property type="protein sequence ID" value="AAA31393.1"/>
    <property type="status" value="JOINED"/>
    <property type="molecule type" value="Genomic_DNA"/>
</dbReference>
<dbReference type="EMBL" id="M21467">
    <property type="protein sequence ID" value="AAA31393.1"/>
    <property type="status" value="JOINED"/>
    <property type="molecule type" value="Genomic_DNA"/>
</dbReference>
<dbReference type="PIR" id="A32283">
    <property type="entry name" value="A32283"/>
</dbReference>
<dbReference type="SMR" id="P20756"/>
<dbReference type="STRING" id="9986.ENSOCUP00000007527"/>
<dbReference type="PaxDb" id="9986-ENSOCUP00000007527"/>
<dbReference type="eggNOG" id="ENOG502RYBQ">
    <property type="taxonomic scope" value="Eukaryota"/>
</dbReference>
<dbReference type="InParanoid" id="P20756"/>
<dbReference type="Proteomes" id="UP000001811">
    <property type="component" value="Unplaced"/>
</dbReference>
<dbReference type="GO" id="GO:0042613">
    <property type="term" value="C:MHC class II protein complex"/>
    <property type="evidence" value="ECO:0007669"/>
    <property type="project" value="UniProtKB-KW"/>
</dbReference>
<dbReference type="GO" id="GO:0002250">
    <property type="term" value="P:adaptive immune response"/>
    <property type="evidence" value="ECO:0007669"/>
    <property type="project" value="UniProtKB-KW"/>
</dbReference>
<dbReference type="GO" id="GO:0002504">
    <property type="term" value="P:antigen processing and presentation of peptide or polysaccharide antigen via MHC class II"/>
    <property type="evidence" value="ECO:0007669"/>
    <property type="project" value="UniProtKB-KW"/>
</dbReference>
<dbReference type="CDD" id="cd21003">
    <property type="entry name" value="IgC1_MHC_II_beta_HLA-DP"/>
    <property type="match status" value="1"/>
</dbReference>
<dbReference type="FunFam" id="2.60.40.10:FF:000116">
    <property type="entry name" value="HLA class II histocompatibility antigen, DRB1-1 beta chain"/>
    <property type="match status" value="1"/>
</dbReference>
<dbReference type="FunFam" id="3.10.320.10:FF:000001">
    <property type="entry name" value="HLA class II histocompatibility antigen, DRB1-1 beta chain"/>
    <property type="match status" value="1"/>
</dbReference>
<dbReference type="Gene3D" id="3.10.320.10">
    <property type="entry name" value="Class II Histocompatibility Antigen, M Beta Chain, Chain B, domain 1"/>
    <property type="match status" value="1"/>
</dbReference>
<dbReference type="Gene3D" id="2.60.40.10">
    <property type="entry name" value="Immunoglobulins"/>
    <property type="match status" value="1"/>
</dbReference>
<dbReference type="InterPro" id="IPR007110">
    <property type="entry name" value="Ig-like_dom"/>
</dbReference>
<dbReference type="InterPro" id="IPR036179">
    <property type="entry name" value="Ig-like_dom_sf"/>
</dbReference>
<dbReference type="InterPro" id="IPR013783">
    <property type="entry name" value="Ig-like_fold"/>
</dbReference>
<dbReference type="InterPro" id="IPR003006">
    <property type="entry name" value="Ig/MHC_CS"/>
</dbReference>
<dbReference type="InterPro" id="IPR003597">
    <property type="entry name" value="Ig_C1-set"/>
</dbReference>
<dbReference type="InterPro" id="IPR050160">
    <property type="entry name" value="MHC/Immunoglobulin"/>
</dbReference>
<dbReference type="InterPro" id="IPR011162">
    <property type="entry name" value="MHC_I/II-like_Ag-recog"/>
</dbReference>
<dbReference type="InterPro" id="IPR014745">
    <property type="entry name" value="MHC_II_a/b_N"/>
</dbReference>
<dbReference type="InterPro" id="IPR000353">
    <property type="entry name" value="MHC_II_b_N"/>
</dbReference>
<dbReference type="PANTHER" id="PTHR19944:SF46">
    <property type="entry name" value="HLA CLASS II HISTOCOMPATIBILITY ANTIGEN, DP BETA 1 CHAIN"/>
    <property type="match status" value="1"/>
</dbReference>
<dbReference type="PANTHER" id="PTHR19944">
    <property type="entry name" value="MHC CLASS II-RELATED"/>
    <property type="match status" value="1"/>
</dbReference>
<dbReference type="Pfam" id="PF07654">
    <property type="entry name" value="C1-set"/>
    <property type="match status" value="1"/>
</dbReference>
<dbReference type="Pfam" id="PF00969">
    <property type="entry name" value="MHC_II_beta"/>
    <property type="match status" value="1"/>
</dbReference>
<dbReference type="SMART" id="SM00407">
    <property type="entry name" value="IGc1"/>
    <property type="match status" value="1"/>
</dbReference>
<dbReference type="SMART" id="SM00921">
    <property type="entry name" value="MHC_II_beta"/>
    <property type="match status" value="1"/>
</dbReference>
<dbReference type="SUPFAM" id="SSF48726">
    <property type="entry name" value="Immunoglobulin"/>
    <property type="match status" value="1"/>
</dbReference>
<dbReference type="SUPFAM" id="SSF54452">
    <property type="entry name" value="MHC antigen-recognition domain"/>
    <property type="match status" value="1"/>
</dbReference>
<dbReference type="PROSITE" id="PS50835">
    <property type="entry name" value="IG_LIKE"/>
    <property type="match status" value="1"/>
</dbReference>
<dbReference type="PROSITE" id="PS00290">
    <property type="entry name" value="IG_MHC"/>
    <property type="match status" value="1"/>
</dbReference>
<feature type="signal peptide" evidence="1">
    <location>
        <begin position="1"/>
        <end position="29"/>
    </location>
</feature>
<feature type="chain" id="PRO_0000019011" description="RLA class II histocompatibility antigen, DP beta chain">
    <location>
        <begin position="30"/>
        <end position="257"/>
    </location>
</feature>
<feature type="topological domain" description="Extracellular" evidence="1">
    <location>
        <begin position="30"/>
        <end position="224"/>
    </location>
</feature>
<feature type="transmembrane region" description="Helical" evidence="1">
    <location>
        <begin position="225"/>
        <end position="245"/>
    </location>
</feature>
<feature type="topological domain" description="Cytoplasmic" evidence="1">
    <location>
        <begin position="246"/>
        <end position="257"/>
    </location>
</feature>
<feature type="domain" description="Ig-like C1-type">
    <location>
        <begin position="123"/>
        <end position="211"/>
    </location>
</feature>
<feature type="region of interest" description="Beta-1">
    <location>
        <begin position="30"/>
        <end position="120"/>
    </location>
</feature>
<feature type="region of interest" description="Beta-2">
    <location>
        <begin position="121"/>
        <end position="214"/>
    </location>
</feature>
<feature type="region of interest" description="Connecting peptide">
    <location>
        <begin position="215"/>
        <end position="224"/>
    </location>
</feature>
<feature type="glycosylation site" description="N-linked (GlcNAc...) asparagine" evidence="1">
    <location>
        <position position="49"/>
    </location>
</feature>
<feature type="disulfide bond" evidence="2">
    <location>
        <begin position="45"/>
        <end position="105"/>
    </location>
</feature>
<feature type="disulfide bond" evidence="2">
    <location>
        <begin position="143"/>
        <end position="199"/>
    </location>
</feature>
<comment type="subcellular location">
    <subcellularLocation>
        <location evidence="3">Membrane</location>
        <topology evidence="3">Single-pass type I membrane protein</topology>
    </subcellularLocation>
</comment>
<comment type="similarity">
    <text evidence="3">Belongs to the MHC class II family.</text>
</comment>
<keyword id="KW-1064">Adaptive immunity</keyword>
<keyword id="KW-1015">Disulfide bond</keyword>
<keyword id="KW-0325">Glycoprotein</keyword>
<keyword id="KW-0391">Immunity</keyword>
<keyword id="KW-0472">Membrane</keyword>
<keyword id="KW-0491">MHC II</keyword>
<keyword id="KW-1185">Reference proteome</keyword>
<keyword id="KW-0732">Signal</keyword>
<keyword id="KW-0812">Transmembrane</keyword>
<keyword id="KW-1133">Transmembrane helix</keyword>
<accession>P20756</accession>
<name>HB2P_RABIT</name>
<proteinExistence type="inferred from homology"/>
<evidence type="ECO:0000255" key="1"/>
<evidence type="ECO:0000255" key="2">
    <source>
        <dbReference type="PROSITE-ProRule" id="PRU00114"/>
    </source>
</evidence>
<evidence type="ECO:0000305" key="3"/>
<protein>
    <recommendedName>
        <fullName>RLA class II histocompatibility antigen, DP beta chain</fullName>
    </recommendedName>
    <alternativeName>
        <fullName>D10 haplotype</fullName>
    </alternativeName>
</protein>
<sequence length="257" mass="29090">MRPCRSLRTAALAVVLTVLLHPVALGRATPGESEQNYLWQRRYECYASNGTQRLLDRCAYNREEFVRFDSDIGEFRAVSELGRQVAESWNLEYLQQARAEVDRVCRHNYELFQGLPVLLQTQPRVSVSPSKKGPLQHHSLLVCHVTDFYPGHVQVRWFLNGREETAGVVSTHPIHNGDWTFQILVMLEMTPHQGDVYTCHVEHPSLDSPITVEWKAQSDSARSKMLAGVGGLVLGLVSLAVGVFMHRRSKKAQQGCR</sequence>